<gene>
    <name evidence="1" type="primary">era</name>
    <name type="ordered locus">Gura_3150</name>
</gene>
<keyword id="KW-0997">Cell inner membrane</keyword>
<keyword id="KW-1003">Cell membrane</keyword>
<keyword id="KW-0963">Cytoplasm</keyword>
<keyword id="KW-0342">GTP-binding</keyword>
<keyword id="KW-0472">Membrane</keyword>
<keyword id="KW-0547">Nucleotide-binding</keyword>
<keyword id="KW-1185">Reference proteome</keyword>
<keyword id="KW-0690">Ribosome biogenesis</keyword>
<keyword id="KW-0694">RNA-binding</keyword>
<keyword id="KW-0699">rRNA-binding</keyword>
<sequence length="297" mass="33229">MTEKQFRSGFVSIIGRPNVGKSTLLNRILGDKIVITSDKPQTTRNRIQGIHNLPGCQMVFIDTPGIHRAKSKLNKYMVDVALSSIKEVDVILFLVEADAKPANQEGMILELLANADAPVLLVINKIDLVAKEALLERIAAYAALYPFREIVPVSALSGDGVERLVEVVHGFIPAGPPYFPDDILTDLPERFIVAEMIREKIFRLTHDEVPYSVAVVVESFKERADGLVSIAAAINVERESQKGIVIGKKGEMLKRIGMQARREIEELLDTKVFLELFVRVSKEWSENTRMLKEFGYE</sequence>
<dbReference type="EMBL" id="CP000698">
    <property type="protein sequence ID" value="ABQ27311.1"/>
    <property type="molecule type" value="Genomic_DNA"/>
</dbReference>
<dbReference type="RefSeq" id="WP_011939977.1">
    <property type="nucleotide sequence ID" value="NC_009483.1"/>
</dbReference>
<dbReference type="SMR" id="A5G693"/>
<dbReference type="STRING" id="351605.Gura_3150"/>
<dbReference type="KEGG" id="gur:Gura_3150"/>
<dbReference type="HOGENOM" id="CLU_038009_1_0_7"/>
<dbReference type="OrthoDB" id="9805918at2"/>
<dbReference type="Proteomes" id="UP000006695">
    <property type="component" value="Chromosome"/>
</dbReference>
<dbReference type="GO" id="GO:0005829">
    <property type="term" value="C:cytosol"/>
    <property type="evidence" value="ECO:0007669"/>
    <property type="project" value="TreeGrafter"/>
</dbReference>
<dbReference type="GO" id="GO:0005886">
    <property type="term" value="C:plasma membrane"/>
    <property type="evidence" value="ECO:0007669"/>
    <property type="project" value="UniProtKB-SubCell"/>
</dbReference>
<dbReference type="GO" id="GO:0005525">
    <property type="term" value="F:GTP binding"/>
    <property type="evidence" value="ECO:0007669"/>
    <property type="project" value="UniProtKB-UniRule"/>
</dbReference>
<dbReference type="GO" id="GO:0003924">
    <property type="term" value="F:GTPase activity"/>
    <property type="evidence" value="ECO:0007669"/>
    <property type="project" value="UniProtKB-UniRule"/>
</dbReference>
<dbReference type="GO" id="GO:0043024">
    <property type="term" value="F:ribosomal small subunit binding"/>
    <property type="evidence" value="ECO:0007669"/>
    <property type="project" value="TreeGrafter"/>
</dbReference>
<dbReference type="GO" id="GO:0070181">
    <property type="term" value="F:small ribosomal subunit rRNA binding"/>
    <property type="evidence" value="ECO:0007669"/>
    <property type="project" value="UniProtKB-UniRule"/>
</dbReference>
<dbReference type="GO" id="GO:0000028">
    <property type="term" value="P:ribosomal small subunit assembly"/>
    <property type="evidence" value="ECO:0007669"/>
    <property type="project" value="TreeGrafter"/>
</dbReference>
<dbReference type="CDD" id="cd04163">
    <property type="entry name" value="Era"/>
    <property type="match status" value="1"/>
</dbReference>
<dbReference type="CDD" id="cd22534">
    <property type="entry name" value="KH-II_Era"/>
    <property type="match status" value="1"/>
</dbReference>
<dbReference type="FunFam" id="3.30.300.20:FF:000003">
    <property type="entry name" value="GTPase Era"/>
    <property type="match status" value="1"/>
</dbReference>
<dbReference type="FunFam" id="3.40.50.300:FF:000094">
    <property type="entry name" value="GTPase Era"/>
    <property type="match status" value="1"/>
</dbReference>
<dbReference type="Gene3D" id="3.30.300.20">
    <property type="match status" value="1"/>
</dbReference>
<dbReference type="Gene3D" id="3.40.50.300">
    <property type="entry name" value="P-loop containing nucleotide triphosphate hydrolases"/>
    <property type="match status" value="1"/>
</dbReference>
<dbReference type="HAMAP" id="MF_00367">
    <property type="entry name" value="GTPase_Era"/>
    <property type="match status" value="1"/>
</dbReference>
<dbReference type="InterPro" id="IPR030388">
    <property type="entry name" value="G_ERA_dom"/>
</dbReference>
<dbReference type="InterPro" id="IPR006073">
    <property type="entry name" value="GTP-bd"/>
</dbReference>
<dbReference type="InterPro" id="IPR005662">
    <property type="entry name" value="GTPase_Era-like"/>
</dbReference>
<dbReference type="InterPro" id="IPR015946">
    <property type="entry name" value="KH_dom-like_a/b"/>
</dbReference>
<dbReference type="InterPro" id="IPR004044">
    <property type="entry name" value="KH_dom_type_2"/>
</dbReference>
<dbReference type="InterPro" id="IPR009019">
    <property type="entry name" value="KH_sf_prok-type"/>
</dbReference>
<dbReference type="InterPro" id="IPR027417">
    <property type="entry name" value="P-loop_NTPase"/>
</dbReference>
<dbReference type="InterPro" id="IPR005225">
    <property type="entry name" value="Small_GTP-bd"/>
</dbReference>
<dbReference type="NCBIfam" id="TIGR00436">
    <property type="entry name" value="era"/>
    <property type="match status" value="1"/>
</dbReference>
<dbReference type="NCBIfam" id="NF000908">
    <property type="entry name" value="PRK00089.1"/>
    <property type="match status" value="1"/>
</dbReference>
<dbReference type="NCBIfam" id="TIGR00231">
    <property type="entry name" value="small_GTP"/>
    <property type="match status" value="1"/>
</dbReference>
<dbReference type="PANTHER" id="PTHR42698">
    <property type="entry name" value="GTPASE ERA"/>
    <property type="match status" value="1"/>
</dbReference>
<dbReference type="PANTHER" id="PTHR42698:SF1">
    <property type="entry name" value="GTPASE ERA, MITOCHONDRIAL"/>
    <property type="match status" value="1"/>
</dbReference>
<dbReference type="Pfam" id="PF07650">
    <property type="entry name" value="KH_2"/>
    <property type="match status" value="1"/>
</dbReference>
<dbReference type="Pfam" id="PF01926">
    <property type="entry name" value="MMR_HSR1"/>
    <property type="match status" value="1"/>
</dbReference>
<dbReference type="PRINTS" id="PR00326">
    <property type="entry name" value="GTP1OBG"/>
</dbReference>
<dbReference type="SUPFAM" id="SSF52540">
    <property type="entry name" value="P-loop containing nucleoside triphosphate hydrolases"/>
    <property type="match status" value="1"/>
</dbReference>
<dbReference type="SUPFAM" id="SSF54814">
    <property type="entry name" value="Prokaryotic type KH domain (KH-domain type II)"/>
    <property type="match status" value="1"/>
</dbReference>
<dbReference type="PROSITE" id="PS51713">
    <property type="entry name" value="G_ERA"/>
    <property type="match status" value="1"/>
</dbReference>
<dbReference type="PROSITE" id="PS50823">
    <property type="entry name" value="KH_TYPE_2"/>
    <property type="match status" value="1"/>
</dbReference>
<organism>
    <name type="scientific">Geotalea uraniireducens (strain Rf4)</name>
    <name type="common">Geobacter uraniireducens</name>
    <dbReference type="NCBI Taxonomy" id="351605"/>
    <lineage>
        <taxon>Bacteria</taxon>
        <taxon>Pseudomonadati</taxon>
        <taxon>Thermodesulfobacteriota</taxon>
        <taxon>Desulfuromonadia</taxon>
        <taxon>Geobacterales</taxon>
        <taxon>Geobacteraceae</taxon>
        <taxon>Geotalea</taxon>
    </lineage>
</organism>
<comment type="function">
    <text evidence="1">An essential GTPase that binds both GDP and GTP, with rapid nucleotide exchange. Plays a role in 16S rRNA processing and 30S ribosomal subunit biogenesis and possibly also in cell cycle regulation and energy metabolism.</text>
</comment>
<comment type="subunit">
    <text evidence="1">Monomer.</text>
</comment>
<comment type="subcellular location">
    <subcellularLocation>
        <location>Cytoplasm</location>
    </subcellularLocation>
    <subcellularLocation>
        <location evidence="1">Cell inner membrane</location>
        <topology evidence="1">Peripheral membrane protein</topology>
    </subcellularLocation>
</comment>
<comment type="similarity">
    <text evidence="1 2">Belongs to the TRAFAC class TrmE-Era-EngA-EngB-Septin-like GTPase superfamily. Era GTPase family.</text>
</comment>
<name>ERA_GEOUR</name>
<feature type="chain" id="PRO_1000205544" description="GTPase Era">
    <location>
        <begin position="1"/>
        <end position="297"/>
    </location>
</feature>
<feature type="domain" description="Era-type G" evidence="2">
    <location>
        <begin position="7"/>
        <end position="174"/>
    </location>
</feature>
<feature type="domain" description="KH type-2" evidence="1">
    <location>
        <begin position="205"/>
        <end position="282"/>
    </location>
</feature>
<feature type="region of interest" description="G1" evidence="2">
    <location>
        <begin position="15"/>
        <end position="22"/>
    </location>
</feature>
<feature type="region of interest" description="G2" evidence="2">
    <location>
        <begin position="41"/>
        <end position="45"/>
    </location>
</feature>
<feature type="region of interest" description="G3" evidence="2">
    <location>
        <begin position="62"/>
        <end position="65"/>
    </location>
</feature>
<feature type="region of interest" description="G4" evidence="2">
    <location>
        <begin position="124"/>
        <end position="127"/>
    </location>
</feature>
<feature type="region of interest" description="G5" evidence="2">
    <location>
        <begin position="153"/>
        <end position="155"/>
    </location>
</feature>
<feature type="binding site" evidence="1">
    <location>
        <begin position="15"/>
        <end position="22"/>
    </location>
    <ligand>
        <name>GTP</name>
        <dbReference type="ChEBI" id="CHEBI:37565"/>
    </ligand>
</feature>
<feature type="binding site" evidence="1">
    <location>
        <begin position="62"/>
        <end position="66"/>
    </location>
    <ligand>
        <name>GTP</name>
        <dbReference type="ChEBI" id="CHEBI:37565"/>
    </ligand>
</feature>
<feature type="binding site" evidence="1">
    <location>
        <begin position="124"/>
        <end position="127"/>
    </location>
    <ligand>
        <name>GTP</name>
        <dbReference type="ChEBI" id="CHEBI:37565"/>
    </ligand>
</feature>
<protein>
    <recommendedName>
        <fullName evidence="1">GTPase Era</fullName>
    </recommendedName>
</protein>
<evidence type="ECO:0000255" key="1">
    <source>
        <dbReference type="HAMAP-Rule" id="MF_00367"/>
    </source>
</evidence>
<evidence type="ECO:0000255" key="2">
    <source>
        <dbReference type="PROSITE-ProRule" id="PRU01050"/>
    </source>
</evidence>
<proteinExistence type="inferred from homology"/>
<accession>A5G693</accession>
<reference key="1">
    <citation type="submission" date="2007-05" db="EMBL/GenBank/DDBJ databases">
        <title>Complete sequence of Geobacter uraniireducens Rf4.</title>
        <authorList>
            <consortium name="US DOE Joint Genome Institute"/>
            <person name="Copeland A."/>
            <person name="Lucas S."/>
            <person name="Lapidus A."/>
            <person name="Barry K."/>
            <person name="Detter J.C."/>
            <person name="Glavina del Rio T."/>
            <person name="Hammon N."/>
            <person name="Israni S."/>
            <person name="Dalin E."/>
            <person name="Tice H."/>
            <person name="Pitluck S."/>
            <person name="Chertkov O."/>
            <person name="Brettin T."/>
            <person name="Bruce D."/>
            <person name="Han C."/>
            <person name="Schmutz J."/>
            <person name="Larimer F."/>
            <person name="Land M."/>
            <person name="Hauser L."/>
            <person name="Kyrpides N."/>
            <person name="Mikhailova N."/>
            <person name="Shelobolina E."/>
            <person name="Aklujkar M."/>
            <person name="Lovley D."/>
            <person name="Richardson P."/>
        </authorList>
    </citation>
    <scope>NUCLEOTIDE SEQUENCE [LARGE SCALE GENOMIC DNA]</scope>
    <source>
        <strain>ATCC BAA-1134 / JCM 13001 / Rf4</strain>
    </source>
</reference>